<dbReference type="EC" id="2.1.3.-" evidence="1"/>
<dbReference type="EMBL" id="CP000436">
    <property type="protein sequence ID" value="ABI25497.1"/>
    <property type="molecule type" value="Genomic_DNA"/>
</dbReference>
<dbReference type="SMR" id="Q0I3S4"/>
<dbReference type="KEGG" id="hso:HS_1222"/>
<dbReference type="eggNOG" id="COG4106">
    <property type="taxonomic scope" value="Bacteria"/>
</dbReference>
<dbReference type="HOGENOM" id="CLU_078475_0_0_6"/>
<dbReference type="GO" id="GO:0016743">
    <property type="term" value="F:carboxyl- or carbamoyltransferase activity"/>
    <property type="evidence" value="ECO:0007669"/>
    <property type="project" value="UniProtKB-UniRule"/>
</dbReference>
<dbReference type="GO" id="GO:1904047">
    <property type="term" value="F:S-adenosyl-L-methionine binding"/>
    <property type="evidence" value="ECO:0007669"/>
    <property type="project" value="UniProtKB-UniRule"/>
</dbReference>
<dbReference type="GO" id="GO:0002098">
    <property type="term" value="P:tRNA wobble uridine modification"/>
    <property type="evidence" value="ECO:0007669"/>
    <property type="project" value="InterPro"/>
</dbReference>
<dbReference type="CDD" id="cd02440">
    <property type="entry name" value="AdoMet_MTases"/>
    <property type="match status" value="1"/>
</dbReference>
<dbReference type="Gene3D" id="3.40.50.150">
    <property type="entry name" value="Vaccinia Virus protein VP39"/>
    <property type="match status" value="1"/>
</dbReference>
<dbReference type="HAMAP" id="MF_01589">
    <property type="entry name" value="Cx_SAM_synthase"/>
    <property type="match status" value="1"/>
</dbReference>
<dbReference type="InterPro" id="IPR005271">
    <property type="entry name" value="CmoA"/>
</dbReference>
<dbReference type="InterPro" id="IPR041698">
    <property type="entry name" value="Methyltransf_25"/>
</dbReference>
<dbReference type="InterPro" id="IPR029063">
    <property type="entry name" value="SAM-dependent_MTases_sf"/>
</dbReference>
<dbReference type="NCBIfam" id="TIGR00740">
    <property type="entry name" value="carboxy-S-adenosyl-L-methionine synthase CmoA"/>
    <property type="match status" value="1"/>
</dbReference>
<dbReference type="NCBIfam" id="NF011995">
    <property type="entry name" value="PRK15451.1"/>
    <property type="match status" value="1"/>
</dbReference>
<dbReference type="PANTHER" id="PTHR43861:SF2">
    <property type="entry name" value="CARBOXY-S-ADENOSYL-L-METHIONINE SYNTHASE"/>
    <property type="match status" value="1"/>
</dbReference>
<dbReference type="PANTHER" id="PTHR43861">
    <property type="entry name" value="TRANS-ACONITATE 2-METHYLTRANSFERASE-RELATED"/>
    <property type="match status" value="1"/>
</dbReference>
<dbReference type="Pfam" id="PF13649">
    <property type="entry name" value="Methyltransf_25"/>
    <property type="match status" value="1"/>
</dbReference>
<dbReference type="PIRSF" id="PIRSF006325">
    <property type="entry name" value="MeTrfase_bac"/>
    <property type="match status" value="1"/>
</dbReference>
<dbReference type="SUPFAM" id="SSF53335">
    <property type="entry name" value="S-adenosyl-L-methionine-dependent methyltransferases"/>
    <property type="match status" value="1"/>
</dbReference>
<sequence length="241" mass="27518">MNKDCIFAAPIEKLGDFTFDENVAEVFPDMIQRSVPGYSNIITAIGMFAERFVTANSLVYDLGCSRGAATLSARRHITQPNVKIIGVDNSLPMVERCRQHINAYQSDIPVEILCDDIRNIKIENASMVILNFTLQFVPQQDRQLLLEKIYQGLNPNGGLVLSEKFRFENKKMDDLLIDFHHQFKRANGYSELEVSQKRTALENVMRTDSIETHKERLKSAGFSQIELWFQCFNFGSMVAIK</sequence>
<proteinExistence type="inferred from homology"/>
<feature type="chain" id="PRO_0000314336" description="Carboxy-S-adenosyl-L-methionine synthase">
    <location>
        <begin position="1"/>
        <end position="241"/>
    </location>
</feature>
<feature type="binding site" evidence="1">
    <location>
        <position position="38"/>
    </location>
    <ligand>
        <name>S-adenosyl-L-methionine</name>
        <dbReference type="ChEBI" id="CHEBI:59789"/>
    </ligand>
</feature>
<feature type="binding site" evidence="1">
    <location>
        <begin position="63"/>
        <end position="65"/>
    </location>
    <ligand>
        <name>S-adenosyl-L-methionine</name>
        <dbReference type="ChEBI" id="CHEBI:59789"/>
    </ligand>
</feature>
<feature type="binding site" evidence="1">
    <location>
        <begin position="88"/>
        <end position="89"/>
    </location>
    <ligand>
        <name>S-adenosyl-L-methionine</name>
        <dbReference type="ChEBI" id="CHEBI:59789"/>
    </ligand>
</feature>
<feature type="binding site" evidence="1">
    <location>
        <begin position="116"/>
        <end position="117"/>
    </location>
    <ligand>
        <name>S-adenosyl-L-methionine</name>
        <dbReference type="ChEBI" id="CHEBI:59789"/>
    </ligand>
</feature>
<feature type="binding site" evidence="1">
    <location>
        <position position="131"/>
    </location>
    <ligand>
        <name>S-adenosyl-L-methionine</name>
        <dbReference type="ChEBI" id="CHEBI:59789"/>
    </ligand>
</feature>
<feature type="binding site" evidence="1">
    <location>
        <position position="198"/>
    </location>
    <ligand>
        <name>S-adenosyl-L-methionine</name>
        <dbReference type="ChEBI" id="CHEBI:59789"/>
    </ligand>
</feature>
<reference key="1">
    <citation type="journal article" date="2007" name="J. Bacteriol.">
        <title>Complete genome sequence of Haemophilus somnus (Histophilus somni) strain 129Pt and comparison to Haemophilus ducreyi 35000HP and Haemophilus influenzae Rd.</title>
        <authorList>
            <person name="Challacombe J.F."/>
            <person name="Duncan A.J."/>
            <person name="Brettin T.S."/>
            <person name="Bruce D."/>
            <person name="Chertkov O."/>
            <person name="Detter J.C."/>
            <person name="Han C.S."/>
            <person name="Misra M."/>
            <person name="Richardson P."/>
            <person name="Tapia R."/>
            <person name="Thayer N."/>
            <person name="Xie G."/>
            <person name="Inzana T.J."/>
        </authorList>
    </citation>
    <scope>NUCLEOTIDE SEQUENCE [LARGE SCALE GENOMIC DNA]</scope>
    <source>
        <strain>129Pt</strain>
    </source>
</reference>
<gene>
    <name evidence="1" type="primary">cmoA</name>
    <name type="ordered locus">HS_1222</name>
</gene>
<keyword id="KW-0949">S-adenosyl-L-methionine</keyword>
<keyword id="KW-0808">Transferase</keyword>
<protein>
    <recommendedName>
        <fullName evidence="1">Carboxy-S-adenosyl-L-methionine synthase</fullName>
        <shortName evidence="1">Cx-SAM synthase</shortName>
        <ecNumber evidence="1">2.1.3.-</ecNumber>
    </recommendedName>
</protein>
<organism>
    <name type="scientific">Histophilus somni (strain 129Pt)</name>
    <name type="common">Haemophilus somnus</name>
    <dbReference type="NCBI Taxonomy" id="205914"/>
    <lineage>
        <taxon>Bacteria</taxon>
        <taxon>Pseudomonadati</taxon>
        <taxon>Pseudomonadota</taxon>
        <taxon>Gammaproteobacteria</taxon>
        <taxon>Pasteurellales</taxon>
        <taxon>Pasteurellaceae</taxon>
        <taxon>Histophilus</taxon>
    </lineage>
</organism>
<accession>Q0I3S4</accession>
<evidence type="ECO:0000255" key="1">
    <source>
        <dbReference type="HAMAP-Rule" id="MF_01589"/>
    </source>
</evidence>
<comment type="function">
    <text evidence="1">Catalyzes the conversion of S-adenosyl-L-methionine (SAM) to carboxy-S-adenosyl-L-methionine (Cx-SAM).</text>
</comment>
<comment type="catalytic activity">
    <reaction evidence="1">
        <text>prephenate + S-adenosyl-L-methionine = carboxy-S-adenosyl-L-methionine + 3-phenylpyruvate + H2O</text>
        <dbReference type="Rhea" id="RHEA:51692"/>
        <dbReference type="ChEBI" id="CHEBI:15377"/>
        <dbReference type="ChEBI" id="CHEBI:18005"/>
        <dbReference type="ChEBI" id="CHEBI:29934"/>
        <dbReference type="ChEBI" id="CHEBI:59789"/>
        <dbReference type="ChEBI" id="CHEBI:134278"/>
    </reaction>
</comment>
<comment type="subunit">
    <text evidence="1">Homodimer.</text>
</comment>
<comment type="similarity">
    <text evidence="1">Belongs to the class I-like SAM-binding methyltransferase superfamily. Cx-SAM synthase family.</text>
</comment>
<name>CMOA_HISS1</name>